<proteinExistence type="evidence at transcript level"/>
<dbReference type="EMBL" id="AB086179">
    <property type="protein sequence ID" value="BAC55379.1"/>
    <property type="molecule type" value="Genomic_DNA"/>
</dbReference>
<dbReference type="EMBL" id="AB087464">
    <property type="protein sequence ID" value="BAC55476.1"/>
    <property type="molecule type" value="mRNA"/>
</dbReference>
<dbReference type="RefSeq" id="NP_777443.1">
    <property type="nucleotide sequence ID" value="NC_004543.1"/>
</dbReference>
<dbReference type="SMR" id="Q85A24"/>
<dbReference type="GeneID" id="2553511"/>
<dbReference type="GO" id="GO:0009535">
    <property type="term" value="C:chloroplast thylakoid membrane"/>
    <property type="evidence" value="ECO:0007669"/>
    <property type="project" value="UniProtKB-SubCell"/>
</dbReference>
<dbReference type="GO" id="GO:0045158">
    <property type="term" value="F:electron transporter, transferring electrons within cytochrome b6/f complex of photosystem II activity"/>
    <property type="evidence" value="ECO:0007669"/>
    <property type="project" value="UniProtKB-UniRule"/>
</dbReference>
<dbReference type="GO" id="GO:0046872">
    <property type="term" value="F:metal ion binding"/>
    <property type="evidence" value="ECO:0007669"/>
    <property type="project" value="UniProtKB-KW"/>
</dbReference>
<dbReference type="GO" id="GO:0016491">
    <property type="term" value="F:oxidoreductase activity"/>
    <property type="evidence" value="ECO:0007669"/>
    <property type="project" value="InterPro"/>
</dbReference>
<dbReference type="GO" id="GO:0015979">
    <property type="term" value="P:photosynthesis"/>
    <property type="evidence" value="ECO:0007669"/>
    <property type="project" value="UniProtKB-UniRule"/>
</dbReference>
<dbReference type="GO" id="GO:0022904">
    <property type="term" value="P:respiratory electron transport chain"/>
    <property type="evidence" value="ECO:0007669"/>
    <property type="project" value="InterPro"/>
</dbReference>
<dbReference type="CDD" id="cd00284">
    <property type="entry name" value="Cytochrome_b_N"/>
    <property type="match status" value="1"/>
</dbReference>
<dbReference type="FunFam" id="1.20.810.10:FF:000001">
    <property type="entry name" value="Cytochrome b6"/>
    <property type="match status" value="1"/>
</dbReference>
<dbReference type="Gene3D" id="1.20.810.10">
    <property type="entry name" value="Cytochrome Bc1 Complex, Chain C"/>
    <property type="match status" value="1"/>
</dbReference>
<dbReference type="HAMAP" id="MF_00633">
    <property type="entry name" value="Cytb6_f_cytb6"/>
    <property type="match status" value="1"/>
</dbReference>
<dbReference type="InterPro" id="IPR005797">
    <property type="entry name" value="Cyt_b/b6_N"/>
</dbReference>
<dbReference type="InterPro" id="IPR023530">
    <property type="entry name" value="Cyt_B6_PetB"/>
</dbReference>
<dbReference type="InterPro" id="IPR027387">
    <property type="entry name" value="Cytb/b6-like_sf"/>
</dbReference>
<dbReference type="InterPro" id="IPR048259">
    <property type="entry name" value="Cytochrome_b_N_euk/bac"/>
</dbReference>
<dbReference type="InterPro" id="IPR016174">
    <property type="entry name" value="Di-haem_cyt_TM"/>
</dbReference>
<dbReference type="NCBIfam" id="NF002990">
    <property type="entry name" value="PRK03735.1"/>
    <property type="match status" value="1"/>
</dbReference>
<dbReference type="PANTHER" id="PTHR19271">
    <property type="entry name" value="CYTOCHROME B"/>
    <property type="match status" value="1"/>
</dbReference>
<dbReference type="PANTHER" id="PTHR19271:SF16">
    <property type="entry name" value="CYTOCHROME B"/>
    <property type="match status" value="1"/>
</dbReference>
<dbReference type="Pfam" id="PF00033">
    <property type="entry name" value="Cytochrome_B"/>
    <property type="match status" value="1"/>
</dbReference>
<dbReference type="PIRSF" id="PIRSF000032">
    <property type="entry name" value="Cytochrome_b6"/>
    <property type="match status" value="1"/>
</dbReference>
<dbReference type="SUPFAM" id="SSF81342">
    <property type="entry name" value="Transmembrane di-heme cytochromes"/>
    <property type="match status" value="1"/>
</dbReference>
<dbReference type="PROSITE" id="PS51002">
    <property type="entry name" value="CYTB_NTER"/>
    <property type="match status" value="1"/>
</dbReference>
<feature type="chain" id="PRO_0000061781" description="Cytochrome b6">
    <location>
        <begin position="1"/>
        <end position="215"/>
    </location>
</feature>
<feature type="transmembrane region" description="Helical" evidence="1">
    <location>
        <begin position="32"/>
        <end position="52"/>
    </location>
</feature>
<feature type="transmembrane region" description="Helical" evidence="1">
    <location>
        <begin position="90"/>
        <end position="110"/>
    </location>
</feature>
<feature type="transmembrane region" description="Helical" evidence="1">
    <location>
        <begin position="116"/>
        <end position="136"/>
    </location>
</feature>
<feature type="transmembrane region" description="Helical" evidence="1">
    <location>
        <begin position="186"/>
        <end position="206"/>
    </location>
</feature>
<feature type="binding site" description="covalent" evidence="1">
    <location>
        <position position="35"/>
    </location>
    <ligand>
        <name>heme c</name>
        <dbReference type="ChEBI" id="CHEBI:61717"/>
    </ligand>
</feature>
<feature type="binding site" description="axial binding residue" evidence="1">
    <location>
        <position position="86"/>
    </location>
    <ligand>
        <name>heme b</name>
        <dbReference type="ChEBI" id="CHEBI:60344"/>
        <label>2</label>
    </ligand>
    <ligandPart>
        <name>Fe</name>
        <dbReference type="ChEBI" id="CHEBI:18248"/>
    </ligandPart>
</feature>
<feature type="binding site" description="axial binding residue" evidence="1">
    <location>
        <position position="100"/>
    </location>
    <ligand>
        <name>heme b</name>
        <dbReference type="ChEBI" id="CHEBI:60344"/>
        <label>1</label>
    </ligand>
    <ligandPart>
        <name>Fe</name>
        <dbReference type="ChEBI" id="CHEBI:18248"/>
    </ligandPart>
</feature>
<feature type="binding site" description="axial binding residue" evidence="1">
    <location>
        <position position="187"/>
    </location>
    <ligand>
        <name>heme b</name>
        <dbReference type="ChEBI" id="CHEBI:60344"/>
        <label>2</label>
    </ligand>
    <ligandPart>
        <name>Fe</name>
        <dbReference type="ChEBI" id="CHEBI:18248"/>
    </ligandPart>
</feature>
<feature type="binding site" description="axial binding residue" evidence="1">
    <location>
        <position position="202"/>
    </location>
    <ligand>
        <name>heme b</name>
        <dbReference type="ChEBI" id="CHEBI:60344"/>
        <label>1</label>
    </ligand>
    <ligandPart>
        <name>Fe</name>
        <dbReference type="ChEBI" id="CHEBI:18248"/>
    </ligandPart>
</feature>
<sequence>MGKVYDWFEERLEIQAIADDITSKYVPPHVNIFYCLGGITLTCFLVQVASGFAMTFYYRPTVTEAFASVQYIMTEVNFGWLIRSVHRWSASMMVLMMILHVFRVYLTGGFKKPRELTWVTGVILAVLTVSFGVTGYSLPWDQIGYWAVKIVTGVPEAIPLVGSSLVELLRGSVSVGQSTLTRFYSLHTFVLPLLTAVLMLMHFLMIRKQGISGPL</sequence>
<organism>
    <name type="scientific">Anthoceros angustus</name>
    <name type="common">Hornwort</name>
    <name type="synonym">Anthoceros formosae</name>
    <dbReference type="NCBI Taxonomy" id="48387"/>
    <lineage>
        <taxon>Eukaryota</taxon>
        <taxon>Viridiplantae</taxon>
        <taxon>Streptophyta</taxon>
        <taxon>Embryophyta</taxon>
        <taxon>Anthocerotophyta</taxon>
        <taxon>Anthocerotopsida</taxon>
        <taxon>Anthocerotidae</taxon>
        <taxon>Anthocerotales</taxon>
        <taxon>Anthocerotaceae</taxon>
        <taxon>Anthoceros</taxon>
    </lineage>
</organism>
<name>CYB6_ANTAG</name>
<protein>
    <recommendedName>
        <fullName evidence="1">Cytochrome b6</fullName>
    </recommendedName>
</protein>
<keyword id="KW-0150">Chloroplast</keyword>
<keyword id="KW-0249">Electron transport</keyword>
<keyword id="KW-0349">Heme</keyword>
<keyword id="KW-0408">Iron</keyword>
<keyword id="KW-0472">Membrane</keyword>
<keyword id="KW-0479">Metal-binding</keyword>
<keyword id="KW-0602">Photosynthesis</keyword>
<keyword id="KW-0934">Plastid</keyword>
<keyword id="KW-0691">RNA editing</keyword>
<keyword id="KW-0793">Thylakoid</keyword>
<keyword id="KW-0812">Transmembrane</keyword>
<keyword id="KW-1133">Transmembrane helix</keyword>
<keyword id="KW-0813">Transport</keyword>
<evidence type="ECO:0000255" key="1">
    <source>
        <dbReference type="HAMAP-Rule" id="MF_00633"/>
    </source>
</evidence>
<evidence type="ECO:0000269" key="2">
    <source>
    </source>
</evidence>
<evidence type="ECO:0000269" key="3">
    <source>
    </source>
</evidence>
<reference key="1">
    <citation type="journal article" date="2003" name="Nucleic Acids Res.">
        <title>The complete nucleotide sequence of the hornwort (Anthoceros formosae) chloroplast genome: insight into the earliest land plants.</title>
        <authorList>
            <person name="Kugita M."/>
            <person name="Kaneko A."/>
            <person name="Yamamoto Y."/>
            <person name="Takeya Y."/>
            <person name="Matsumoto T."/>
            <person name="Yoshinaga K."/>
        </authorList>
    </citation>
    <scope>NUCLEOTIDE SEQUENCE [LARGE SCALE GENOMIC DNA]</scope>
    <scope>RNA EDITING</scope>
</reference>
<reference key="2">
    <citation type="journal article" date="2003" name="Nucleic Acids Res.">
        <title>RNA editing in hornwort chloroplasts makes more than half the genes functional.</title>
        <authorList>
            <person name="Kugita M."/>
            <person name="Yamamoto Y."/>
            <person name="Fujikawa T."/>
            <person name="Matsumoto T."/>
            <person name="Yoshinaga K."/>
        </authorList>
    </citation>
    <scope>NUCLEOTIDE SEQUENCE [MRNA]</scope>
    <scope>RNA EDITING</scope>
    <source>
        <tissue>Thallus</tissue>
    </source>
</reference>
<gene>
    <name evidence="1" type="primary">petB</name>
</gene>
<geneLocation type="chloroplast"/>
<comment type="function">
    <text evidence="1">Component of the cytochrome b6-f complex, which mediates electron transfer between photosystem II (PSII) and photosystem I (PSI), cyclic electron flow around PSI, and state transitions.</text>
</comment>
<comment type="cofactor">
    <cofactor evidence="1">
        <name>heme b</name>
        <dbReference type="ChEBI" id="CHEBI:60344"/>
    </cofactor>
    <text evidence="1">Binds 2 heme b groups non-covalently with two histidine residues as axial ligands.</text>
</comment>
<comment type="cofactor">
    <cofactor evidence="1">
        <name>heme c</name>
        <dbReference type="ChEBI" id="CHEBI:61717"/>
    </cofactor>
    <text evidence="1">Binds one heme group covalently by a single cysteine link with no axial amino acid ligand. This heme was named heme ci.</text>
</comment>
<comment type="subunit">
    <text evidence="1">The 4 large subunits of the cytochrome b6-f complex are cytochrome b6, subunit IV (17 kDa polypeptide, PetD), cytochrome f and the Rieske protein, while the 4 small subunits are PetG, PetL, PetM and PetN. The complex functions as a dimer.</text>
</comment>
<comment type="subcellular location">
    <subcellularLocation>
        <location evidence="1">Plastid</location>
        <location evidence="1">Chloroplast thylakoid membrane</location>
        <topology evidence="1">Multi-pass membrane protein</topology>
    </subcellularLocation>
</comment>
<comment type="RNA editing">
    <location>
        <position position="27" evidence="2 3"/>
    </location>
    <location>
        <position position="33" evidence="2 3"/>
    </location>
    <location>
        <position position="58" evidence="2 3"/>
    </location>
    <location>
        <position position="60" evidence="2 3"/>
    </location>
    <location>
        <position position="89" evidence="2 3"/>
    </location>
    <location>
        <position position="95" evidence="2 3"/>
    </location>
    <location>
        <position position="99" evidence="2 3"/>
    </location>
    <location>
        <position position="103" evidence="2 3"/>
    </location>
    <location>
        <position position="113" evidence="2 3"/>
    </location>
    <location>
        <position position="124" evidence="2 3"/>
    </location>
    <location>
        <position position="127" evidence="2 3"/>
    </location>
    <location>
        <position position="142" evidence="2 3"/>
    </location>
    <location>
        <position position="159" evidence="2 3"/>
    </location>
    <location>
        <position position="177" evidence="2 3"/>
    </location>
    <location>
        <position position="188" evidence="2 3"/>
    </location>
    <location>
        <position position="191" evidence="2 3"/>
    </location>
    <location>
        <position position="193" evidence="2 3"/>
    </location>
    <location>
        <position position="198" evidence="2 3"/>
    </location>
    <location>
        <position position="200" evidence="2 3"/>
    </location>
    <location>
        <position position="203" evidence="2 3"/>
    </location>
    <location>
        <position position="214" evidence="2 3"/>
    </location>
    <text>The nonsense codons at positions 142 and 177 are modified to sense codons.</text>
</comment>
<comment type="miscellaneous">
    <text evidence="1">Heme 1 (or BH or b566) is high-potential and absorbs at about 566 nm, and heme 2 (or BL or b562) is low-potential and absorbs at about 562 nm.</text>
</comment>
<comment type="similarity">
    <text evidence="1">Belongs to the cytochrome b family. PetB subfamily.</text>
</comment>
<accession>Q85A24</accession>